<accession>Q8M9T5</accession>
<keyword id="KW-0150">Chloroplast</keyword>
<keyword id="KW-0472">Membrane</keyword>
<keyword id="KW-0520">NAD</keyword>
<keyword id="KW-0521">NADP</keyword>
<keyword id="KW-0934">Plastid</keyword>
<keyword id="KW-0618">Plastoquinone</keyword>
<keyword id="KW-0874">Quinone</keyword>
<keyword id="KW-0793">Thylakoid</keyword>
<keyword id="KW-1278">Translocase</keyword>
<keyword id="KW-0813">Transport</keyword>
<dbReference type="EC" id="7.1.1.-" evidence="1"/>
<dbReference type="EMBL" id="AF494278">
    <property type="protein sequence ID" value="AAM96521.1"/>
    <property type="molecule type" value="Genomic_DNA"/>
</dbReference>
<dbReference type="RefSeq" id="NP_683858.1">
    <property type="nucleotide sequence ID" value="NC_004115.1"/>
</dbReference>
<dbReference type="SMR" id="Q8M9T5"/>
<dbReference type="GeneID" id="860803"/>
<dbReference type="GO" id="GO:0009535">
    <property type="term" value="C:chloroplast thylakoid membrane"/>
    <property type="evidence" value="ECO:0007669"/>
    <property type="project" value="UniProtKB-SubCell"/>
</dbReference>
<dbReference type="GO" id="GO:0051287">
    <property type="term" value="F:NAD binding"/>
    <property type="evidence" value="ECO:0007669"/>
    <property type="project" value="InterPro"/>
</dbReference>
<dbReference type="GO" id="GO:0016655">
    <property type="term" value="F:oxidoreductase activity, acting on NAD(P)H, quinone or similar compound as acceptor"/>
    <property type="evidence" value="ECO:0007669"/>
    <property type="project" value="UniProtKB-UniRule"/>
</dbReference>
<dbReference type="GO" id="GO:0048038">
    <property type="term" value="F:quinone binding"/>
    <property type="evidence" value="ECO:0007669"/>
    <property type="project" value="UniProtKB-KW"/>
</dbReference>
<dbReference type="GO" id="GO:0019684">
    <property type="term" value="P:photosynthesis, light reaction"/>
    <property type="evidence" value="ECO:0007669"/>
    <property type="project" value="UniProtKB-UniRule"/>
</dbReference>
<dbReference type="Gene3D" id="1.10.645.10">
    <property type="entry name" value="Cytochrome-c3 Hydrogenase, chain B"/>
    <property type="match status" value="1"/>
</dbReference>
<dbReference type="HAMAP" id="MF_01358">
    <property type="entry name" value="NDH1_NuoD"/>
    <property type="match status" value="1"/>
</dbReference>
<dbReference type="InterPro" id="IPR001135">
    <property type="entry name" value="NADH_Q_OxRdtase_suD"/>
</dbReference>
<dbReference type="InterPro" id="IPR014029">
    <property type="entry name" value="NADH_UbQ_OxRdtase_49kDa_CS"/>
</dbReference>
<dbReference type="InterPro" id="IPR022885">
    <property type="entry name" value="NDH1_su_D/H"/>
</dbReference>
<dbReference type="InterPro" id="IPR029014">
    <property type="entry name" value="NiFe-Hase_large"/>
</dbReference>
<dbReference type="NCBIfam" id="TIGR01962">
    <property type="entry name" value="NuoD"/>
    <property type="match status" value="1"/>
</dbReference>
<dbReference type="NCBIfam" id="NF004739">
    <property type="entry name" value="PRK06075.1"/>
    <property type="match status" value="1"/>
</dbReference>
<dbReference type="NCBIfam" id="NF005649">
    <property type="entry name" value="PRK07415.1"/>
    <property type="match status" value="1"/>
</dbReference>
<dbReference type="PANTHER" id="PTHR11993:SF10">
    <property type="entry name" value="NADH DEHYDROGENASE [UBIQUINONE] IRON-SULFUR PROTEIN 2, MITOCHONDRIAL"/>
    <property type="match status" value="1"/>
</dbReference>
<dbReference type="PANTHER" id="PTHR11993">
    <property type="entry name" value="NADH-UBIQUINONE OXIDOREDUCTASE 49 KDA SUBUNIT"/>
    <property type="match status" value="1"/>
</dbReference>
<dbReference type="Pfam" id="PF00346">
    <property type="entry name" value="Complex1_49kDa"/>
    <property type="match status" value="1"/>
</dbReference>
<dbReference type="SUPFAM" id="SSF56762">
    <property type="entry name" value="HydB/Nqo4-like"/>
    <property type="match status" value="1"/>
</dbReference>
<dbReference type="PROSITE" id="PS00535">
    <property type="entry name" value="COMPLEX1_49K"/>
    <property type="match status" value="1"/>
</dbReference>
<proteinExistence type="inferred from homology"/>
<gene>
    <name evidence="1" type="primary">ndhH</name>
</gene>
<sequence>MLTKKTDPMIVSMGPHHPSMHGVLRLVVSLDGENVIDCDPVLGYLHRGMEKIAENRSIVQYLPYVTRWDYLATMFTEAITVNAPEKLANIQVPKRASYIRVIMLELSRIASHLLWLGPFMADIGAQTPFFYIFREREMVYDLFESATGMRMMHNYFRIGGVAVDLPYGWLDKCLDFCDYFLPKIAEYENLITNNPIFRKRVEGIGIISREDAINWGLSGAMLRGSGVQWDLRKVDHYECYDELDWSIQWQSDGDCLARYLVRMGEMRESIKIIQQALKAIPGGPYENLEARRLNEGPKSEWNDFEYQFISKKSSPTFKLPKNEHYVRVEAPKGELGIYLIGDDTVFPWRCKIRPPGFVNLQILPQLVKGMKLADIMTILGSIDIIMGEVDR</sequence>
<evidence type="ECO:0000255" key="1">
    <source>
        <dbReference type="HAMAP-Rule" id="MF_01358"/>
    </source>
</evidence>
<geneLocation type="chloroplast"/>
<name>NDHH_CHAGL</name>
<organism>
    <name type="scientific">Chaetosphaeridium globosum</name>
    <name type="common">Charophycean green alga</name>
    <name type="synonym">Herposteiron globosum</name>
    <dbReference type="NCBI Taxonomy" id="96477"/>
    <lineage>
        <taxon>Eukaryota</taxon>
        <taxon>Viridiplantae</taxon>
        <taxon>Streptophyta</taxon>
        <taxon>Coleochaetophyceae</taxon>
        <taxon>Coleochaetales</taxon>
        <taxon>Chaetosphaeridiaceae</taxon>
        <taxon>Chaetosphaeridium</taxon>
    </lineage>
</organism>
<protein>
    <recommendedName>
        <fullName evidence="1">NAD(P)H-quinone oxidoreductase subunit H, chloroplastic</fullName>
        <ecNumber evidence="1">7.1.1.-</ecNumber>
    </recommendedName>
    <alternativeName>
        <fullName>NAD(P)H dehydrogenase subunit H</fullName>
    </alternativeName>
    <alternativeName>
        <fullName evidence="1">NADH-plastoquinone oxidoreductase 49 kDa subunit</fullName>
    </alternativeName>
    <alternativeName>
        <fullName evidence="1">NADH-plastoquinone oxidoreductase subunit H</fullName>
    </alternativeName>
</protein>
<feature type="chain" id="PRO_0000118599" description="NAD(P)H-quinone oxidoreductase subunit H, chloroplastic">
    <location>
        <begin position="1"/>
        <end position="391"/>
    </location>
</feature>
<comment type="function">
    <text evidence="1">NDH shuttles electrons from NAD(P)H:plastoquinone, via FMN and iron-sulfur (Fe-S) centers, to quinones in the photosynthetic chain and possibly in a chloroplast respiratory chain. The immediate electron acceptor for the enzyme in this species is believed to be plastoquinone. Couples the redox reaction to proton translocation, and thus conserves the redox energy in a proton gradient.</text>
</comment>
<comment type="catalytic activity">
    <reaction evidence="1">
        <text>a plastoquinone + NADH + (n+1) H(+)(in) = a plastoquinol + NAD(+) + n H(+)(out)</text>
        <dbReference type="Rhea" id="RHEA:42608"/>
        <dbReference type="Rhea" id="RHEA-COMP:9561"/>
        <dbReference type="Rhea" id="RHEA-COMP:9562"/>
        <dbReference type="ChEBI" id="CHEBI:15378"/>
        <dbReference type="ChEBI" id="CHEBI:17757"/>
        <dbReference type="ChEBI" id="CHEBI:57540"/>
        <dbReference type="ChEBI" id="CHEBI:57945"/>
        <dbReference type="ChEBI" id="CHEBI:62192"/>
    </reaction>
</comment>
<comment type="catalytic activity">
    <reaction evidence="1">
        <text>a plastoquinone + NADPH + (n+1) H(+)(in) = a plastoquinol + NADP(+) + n H(+)(out)</text>
        <dbReference type="Rhea" id="RHEA:42612"/>
        <dbReference type="Rhea" id="RHEA-COMP:9561"/>
        <dbReference type="Rhea" id="RHEA-COMP:9562"/>
        <dbReference type="ChEBI" id="CHEBI:15378"/>
        <dbReference type="ChEBI" id="CHEBI:17757"/>
        <dbReference type="ChEBI" id="CHEBI:57783"/>
        <dbReference type="ChEBI" id="CHEBI:58349"/>
        <dbReference type="ChEBI" id="CHEBI:62192"/>
    </reaction>
</comment>
<comment type="subunit">
    <text evidence="1">NDH is composed of at least 16 different subunits, 5 of which are encoded in the nucleus.</text>
</comment>
<comment type="subcellular location">
    <subcellularLocation>
        <location evidence="1">Plastid</location>
        <location evidence="1">Chloroplast thylakoid membrane</location>
        <topology evidence="1">Peripheral membrane protein</topology>
        <orientation evidence="1">Stromal side</orientation>
    </subcellularLocation>
</comment>
<comment type="similarity">
    <text evidence="1">Belongs to the complex I 49 kDa subunit family.</text>
</comment>
<reference key="1">
    <citation type="journal article" date="2002" name="Proc. Natl. Acad. Sci. U.S.A.">
        <title>The chloroplast and mitochondrial genome sequences of the charophyte Chaetosphaeridium globosum: insights into the timing of the events that restructured organelle DNAs within the green algal lineage that led to land plants.</title>
        <authorList>
            <person name="Turmel M."/>
            <person name="Otis C."/>
            <person name="Lemieux C."/>
        </authorList>
    </citation>
    <scope>NUCLEOTIDE SEQUENCE [LARGE SCALE GENOMIC DNA]</scope>
    <source>
        <strain>M1311</strain>
    </source>
</reference>